<accession>Q6AYP0</accession>
<accession>Q8K470</accession>
<feature type="chain" id="PRO_0000205908" description="Probable inactive allantoicase">
    <location>
        <begin position="1"/>
        <end position="413"/>
    </location>
</feature>
<feature type="sequence conflict" description="In Ref. 2; AAM74035." evidence="1" ref="2">
    <original>V</original>
    <variation>G</variation>
    <location>
        <position position="227"/>
    </location>
</feature>
<feature type="sequence conflict" description="In Ref. 2; AAM74035." evidence="1" ref="2">
    <original>R</original>
    <variation>S</variation>
    <location>
        <position position="258"/>
    </location>
</feature>
<gene>
    <name evidence="3" type="primary">Allc</name>
</gene>
<keyword id="KW-1185">Reference proteome</keyword>
<name>ALLC_RAT</name>
<sequence length="413" mass="46037">MADTPKEGKLTRFLDFTQLIDLASECVGGKVLFATDDFFGPAENLIKSNNPSFKENEYTEFGKWVDGWETRRKRIPGHDWCVIQLGIQGIIRGIDVDISYFSGNYAPRMSIQAANLSEDTVTNIPPRGVKMGAAATSEEFVAITELKSHSWDYLVPMSELKPGDPDSSHNYFFVNSQQRWTHIRLNIFPDGGVARLRVYGTGQRDWAALDSTEPVDLVAIAFGGVCVGFSNAHFGHPNNMIGVGDPKSIADGWETARRLDRPPVLEGNENGFLQVPGCEWAVFRLAHPGVITQIEIDTKYFKGNSPDSCKVDGCILTTLEEEDMIRQKWSLPAHKWKPLLPVTKLTPNQNHLLDSLTLELQDVITHARITIAPDGGVSRLRLKGFPSSICLLRPLREKPMLRFSLKAGFRANL</sequence>
<organism>
    <name type="scientific">Rattus norvegicus</name>
    <name type="common">Rat</name>
    <dbReference type="NCBI Taxonomy" id="10116"/>
    <lineage>
        <taxon>Eukaryota</taxon>
        <taxon>Metazoa</taxon>
        <taxon>Chordata</taxon>
        <taxon>Craniata</taxon>
        <taxon>Vertebrata</taxon>
        <taxon>Euteleostomi</taxon>
        <taxon>Mammalia</taxon>
        <taxon>Eutheria</taxon>
        <taxon>Euarchontoglires</taxon>
        <taxon>Glires</taxon>
        <taxon>Rodentia</taxon>
        <taxon>Myomorpha</taxon>
        <taxon>Muroidea</taxon>
        <taxon>Muridae</taxon>
        <taxon>Murinae</taxon>
        <taxon>Rattus</taxon>
    </lineage>
</organism>
<evidence type="ECO:0000305" key="1"/>
<evidence type="ECO:0000305" key="2">
    <source>
    </source>
</evidence>
<evidence type="ECO:0000312" key="3">
    <source>
        <dbReference type="RGD" id="621804"/>
    </source>
</evidence>
<dbReference type="EMBL" id="BC078971">
    <property type="protein sequence ID" value="AAH78971.1"/>
    <property type="molecule type" value="mRNA"/>
</dbReference>
<dbReference type="EMBL" id="AF480062">
    <property type="protein sequence ID" value="AAM74035.1"/>
    <property type="molecule type" value="mRNA"/>
</dbReference>
<dbReference type="RefSeq" id="NP_001013055.1">
    <property type="nucleotide sequence ID" value="NM_001013037.1"/>
</dbReference>
<dbReference type="RefSeq" id="XP_006240006.1">
    <property type="nucleotide sequence ID" value="XM_006239944.5"/>
</dbReference>
<dbReference type="SMR" id="Q6AYP0"/>
<dbReference type="FunCoup" id="Q6AYP0">
    <property type="interactions" value="5"/>
</dbReference>
<dbReference type="STRING" id="10116.ENSRNOP00000011048"/>
<dbReference type="PhosphoSitePlus" id="Q6AYP0"/>
<dbReference type="PaxDb" id="10116-ENSRNOP00000011048"/>
<dbReference type="Ensembl" id="ENSRNOT00000011048.7">
    <property type="protein sequence ID" value="ENSRNOP00000011048.6"/>
    <property type="gene ID" value="ENSRNOG00000008299.8"/>
</dbReference>
<dbReference type="GeneID" id="246758"/>
<dbReference type="KEGG" id="rno:246758"/>
<dbReference type="AGR" id="RGD:621804"/>
<dbReference type="CTD" id="55821"/>
<dbReference type="RGD" id="621804">
    <property type="gene designation" value="Allc"/>
</dbReference>
<dbReference type="eggNOG" id="KOG4145">
    <property type="taxonomic scope" value="Eukaryota"/>
</dbReference>
<dbReference type="GeneTree" id="ENSGT00390000001793"/>
<dbReference type="HOGENOM" id="CLU_038797_1_2_1"/>
<dbReference type="InParanoid" id="Q6AYP0"/>
<dbReference type="OMA" id="MDDGWET"/>
<dbReference type="OrthoDB" id="10414at9989"/>
<dbReference type="PhylomeDB" id="Q6AYP0"/>
<dbReference type="PRO" id="PR:Q6AYP0"/>
<dbReference type="Proteomes" id="UP000002494">
    <property type="component" value="Chromosome 6"/>
</dbReference>
<dbReference type="Bgee" id="ENSRNOG00000008299">
    <property type="expression patterns" value="Expressed in testis and 2 other cell types or tissues"/>
</dbReference>
<dbReference type="ExpressionAtlas" id="Q6AYP0">
    <property type="expression patterns" value="baseline and differential"/>
</dbReference>
<dbReference type="GO" id="GO:0004037">
    <property type="term" value="F:allantoicase activity"/>
    <property type="evidence" value="ECO:0007669"/>
    <property type="project" value="UniProtKB-EC"/>
</dbReference>
<dbReference type="GO" id="GO:0000256">
    <property type="term" value="P:allantoin catabolic process"/>
    <property type="evidence" value="ECO:0007669"/>
    <property type="project" value="InterPro"/>
</dbReference>
<dbReference type="FunFam" id="2.60.120.260:FF:000077">
    <property type="entry name" value="Probable allantoicase"/>
    <property type="match status" value="1"/>
</dbReference>
<dbReference type="FunFam" id="2.60.120.260:FF:000085">
    <property type="entry name" value="probable allantoicase"/>
    <property type="match status" value="1"/>
</dbReference>
<dbReference type="Gene3D" id="2.60.120.260">
    <property type="entry name" value="Galactose-binding domain-like"/>
    <property type="match status" value="2"/>
</dbReference>
<dbReference type="HAMAP" id="MF_00813">
    <property type="entry name" value="Allantoicase"/>
    <property type="match status" value="1"/>
</dbReference>
<dbReference type="InterPro" id="IPR005164">
    <property type="entry name" value="Allantoicase"/>
</dbReference>
<dbReference type="InterPro" id="IPR015908">
    <property type="entry name" value="Allantoicase_dom"/>
</dbReference>
<dbReference type="InterPro" id="IPR008979">
    <property type="entry name" value="Galactose-bd-like_sf"/>
</dbReference>
<dbReference type="NCBIfam" id="TIGR02961">
    <property type="entry name" value="allantoicase"/>
    <property type="match status" value="1"/>
</dbReference>
<dbReference type="PANTHER" id="PTHR12045">
    <property type="entry name" value="ALLANTOICASE"/>
    <property type="match status" value="1"/>
</dbReference>
<dbReference type="PANTHER" id="PTHR12045:SF3">
    <property type="entry name" value="INACTIVE ALLANTOICASE-RELATED"/>
    <property type="match status" value="1"/>
</dbReference>
<dbReference type="Pfam" id="PF03561">
    <property type="entry name" value="Allantoicase"/>
    <property type="match status" value="2"/>
</dbReference>
<dbReference type="PIRSF" id="PIRSF016516">
    <property type="entry name" value="Allantoicase"/>
    <property type="match status" value="1"/>
</dbReference>
<dbReference type="SUPFAM" id="SSF49785">
    <property type="entry name" value="Galactose-binding domain-like"/>
    <property type="match status" value="2"/>
</dbReference>
<reference key="1">
    <citation type="journal article" date="2004" name="Genome Res.">
        <title>The status, quality, and expansion of the NIH full-length cDNA project: the Mammalian Gene Collection (MGC).</title>
        <authorList>
            <consortium name="The MGC Project Team"/>
        </authorList>
    </citation>
    <scope>NUCLEOTIDE SEQUENCE [LARGE SCALE MRNA]</scope>
    <source>
        <tissue>Testis</tissue>
    </source>
</reference>
<reference key="2">
    <citation type="journal article" date="2003" name="J. Mol. Evol.">
        <title>Selective pressure on the allantoicase gene during vertebrate evolution.</title>
        <authorList>
            <person name="Vigetti D."/>
            <person name="Binelli G."/>
            <person name="Monetti C."/>
            <person name="Prati M."/>
            <person name="Bernardini G."/>
            <person name="Gornati R."/>
        </authorList>
    </citation>
    <scope>NUCLEOTIDE SEQUENCE [MRNA] OF 66-259</scope>
    <scope>FUNCTION</scope>
</reference>
<protein>
    <recommendedName>
        <fullName>Probable inactive allantoicase</fullName>
    </recommendedName>
    <alternativeName>
        <fullName>Allantoate amidinohydrolase</fullName>
    </alternativeName>
</protein>
<comment type="function">
    <text evidence="2">The function of this enzyme is unclear as allantoicase activity is not known to exist in mammals.</text>
</comment>
<comment type="similarity">
    <text evidence="1">Belongs to the allantoicase family.</text>
</comment>
<proteinExistence type="evidence at transcript level"/>